<reference key="1">
    <citation type="journal article" date="2006" name="Proc. Natl. Acad. Sci. U.S.A.">
        <title>Comparative genomics of the lactic acid bacteria.</title>
        <authorList>
            <person name="Makarova K.S."/>
            <person name="Slesarev A."/>
            <person name="Wolf Y.I."/>
            <person name="Sorokin A."/>
            <person name="Mirkin B."/>
            <person name="Koonin E.V."/>
            <person name="Pavlov A."/>
            <person name="Pavlova N."/>
            <person name="Karamychev V."/>
            <person name="Polouchine N."/>
            <person name="Shakhova V."/>
            <person name="Grigoriev I."/>
            <person name="Lou Y."/>
            <person name="Rohksar D."/>
            <person name="Lucas S."/>
            <person name="Huang K."/>
            <person name="Goodstein D.M."/>
            <person name="Hawkins T."/>
            <person name="Plengvidhya V."/>
            <person name="Welker D."/>
            <person name="Hughes J."/>
            <person name="Goh Y."/>
            <person name="Benson A."/>
            <person name="Baldwin K."/>
            <person name="Lee J.-H."/>
            <person name="Diaz-Muniz I."/>
            <person name="Dosti B."/>
            <person name="Smeianov V."/>
            <person name="Wechter W."/>
            <person name="Barabote R."/>
            <person name="Lorca G."/>
            <person name="Altermann E."/>
            <person name="Barrangou R."/>
            <person name="Ganesan B."/>
            <person name="Xie Y."/>
            <person name="Rawsthorne H."/>
            <person name="Tamir D."/>
            <person name="Parker C."/>
            <person name="Breidt F."/>
            <person name="Broadbent J.R."/>
            <person name="Hutkins R."/>
            <person name="O'Sullivan D."/>
            <person name="Steele J."/>
            <person name="Unlu G."/>
            <person name="Saier M.H. Jr."/>
            <person name="Klaenhammer T."/>
            <person name="Richardson P."/>
            <person name="Kozyavkin S."/>
            <person name="Weimer B.C."/>
            <person name="Mills D.A."/>
        </authorList>
    </citation>
    <scope>NUCLEOTIDE SEQUENCE [LARGE SCALE GENOMIC DNA]</scope>
    <source>
        <strain>ATCC BAA-365 / Lb-18</strain>
    </source>
</reference>
<name>FMT_LACDB</name>
<proteinExistence type="inferred from homology"/>
<organism>
    <name type="scientific">Lactobacillus delbrueckii subsp. bulgaricus (strain ATCC BAA-365 / Lb-18)</name>
    <dbReference type="NCBI Taxonomy" id="321956"/>
    <lineage>
        <taxon>Bacteria</taxon>
        <taxon>Bacillati</taxon>
        <taxon>Bacillota</taxon>
        <taxon>Bacilli</taxon>
        <taxon>Lactobacillales</taxon>
        <taxon>Lactobacillaceae</taxon>
        <taxon>Lactobacillus</taxon>
    </lineage>
</organism>
<evidence type="ECO:0000255" key="1">
    <source>
        <dbReference type="HAMAP-Rule" id="MF_00182"/>
    </source>
</evidence>
<keyword id="KW-0648">Protein biosynthesis</keyword>
<keyword id="KW-0808">Transferase</keyword>
<dbReference type="EC" id="2.1.2.9" evidence="1"/>
<dbReference type="EMBL" id="CP000412">
    <property type="protein sequence ID" value="ABJ58832.1"/>
    <property type="molecule type" value="Genomic_DNA"/>
</dbReference>
<dbReference type="RefSeq" id="WP_003618469.1">
    <property type="nucleotide sequence ID" value="NC_008529.1"/>
</dbReference>
<dbReference type="SMR" id="Q049P0"/>
<dbReference type="KEGG" id="lbu:LBUL_1309"/>
<dbReference type="HOGENOM" id="CLU_033347_1_1_9"/>
<dbReference type="BioCyc" id="LDEL321956:LBUL_RS06160-MONOMER"/>
<dbReference type="GO" id="GO:0005829">
    <property type="term" value="C:cytosol"/>
    <property type="evidence" value="ECO:0007669"/>
    <property type="project" value="TreeGrafter"/>
</dbReference>
<dbReference type="GO" id="GO:0004479">
    <property type="term" value="F:methionyl-tRNA formyltransferase activity"/>
    <property type="evidence" value="ECO:0007669"/>
    <property type="project" value="UniProtKB-UniRule"/>
</dbReference>
<dbReference type="CDD" id="cd08646">
    <property type="entry name" value="FMT_core_Met-tRNA-FMT_N"/>
    <property type="match status" value="1"/>
</dbReference>
<dbReference type="CDD" id="cd08704">
    <property type="entry name" value="Met_tRNA_FMT_C"/>
    <property type="match status" value="1"/>
</dbReference>
<dbReference type="Gene3D" id="3.10.25.10">
    <property type="entry name" value="Formyl transferase, C-terminal domain"/>
    <property type="match status" value="1"/>
</dbReference>
<dbReference type="Gene3D" id="3.40.50.170">
    <property type="entry name" value="Formyl transferase, N-terminal domain"/>
    <property type="match status" value="1"/>
</dbReference>
<dbReference type="HAMAP" id="MF_00182">
    <property type="entry name" value="Formyl_trans"/>
    <property type="match status" value="1"/>
</dbReference>
<dbReference type="InterPro" id="IPR005794">
    <property type="entry name" value="Fmt"/>
</dbReference>
<dbReference type="InterPro" id="IPR005793">
    <property type="entry name" value="Formyl_trans_C"/>
</dbReference>
<dbReference type="InterPro" id="IPR037022">
    <property type="entry name" value="Formyl_trans_C_sf"/>
</dbReference>
<dbReference type="InterPro" id="IPR002376">
    <property type="entry name" value="Formyl_transf_N"/>
</dbReference>
<dbReference type="InterPro" id="IPR036477">
    <property type="entry name" value="Formyl_transf_N_sf"/>
</dbReference>
<dbReference type="InterPro" id="IPR011034">
    <property type="entry name" value="Formyl_transferase-like_C_sf"/>
</dbReference>
<dbReference type="InterPro" id="IPR001555">
    <property type="entry name" value="GART_AS"/>
</dbReference>
<dbReference type="InterPro" id="IPR044135">
    <property type="entry name" value="Met-tRNA-FMT_C"/>
</dbReference>
<dbReference type="InterPro" id="IPR041711">
    <property type="entry name" value="Met-tRNA-FMT_N"/>
</dbReference>
<dbReference type="NCBIfam" id="TIGR00460">
    <property type="entry name" value="fmt"/>
    <property type="match status" value="1"/>
</dbReference>
<dbReference type="PANTHER" id="PTHR11138">
    <property type="entry name" value="METHIONYL-TRNA FORMYLTRANSFERASE"/>
    <property type="match status" value="1"/>
</dbReference>
<dbReference type="PANTHER" id="PTHR11138:SF5">
    <property type="entry name" value="METHIONYL-TRNA FORMYLTRANSFERASE, MITOCHONDRIAL"/>
    <property type="match status" value="1"/>
</dbReference>
<dbReference type="Pfam" id="PF02911">
    <property type="entry name" value="Formyl_trans_C"/>
    <property type="match status" value="1"/>
</dbReference>
<dbReference type="Pfam" id="PF00551">
    <property type="entry name" value="Formyl_trans_N"/>
    <property type="match status" value="1"/>
</dbReference>
<dbReference type="SUPFAM" id="SSF50486">
    <property type="entry name" value="FMT C-terminal domain-like"/>
    <property type="match status" value="1"/>
</dbReference>
<dbReference type="SUPFAM" id="SSF53328">
    <property type="entry name" value="Formyltransferase"/>
    <property type="match status" value="1"/>
</dbReference>
<dbReference type="PROSITE" id="PS00373">
    <property type="entry name" value="GART"/>
    <property type="match status" value="1"/>
</dbReference>
<comment type="function">
    <text evidence="1">Attaches a formyl group to the free amino group of methionyl-tRNA(fMet). The formyl group appears to play a dual role in the initiator identity of N-formylmethionyl-tRNA by promoting its recognition by IF2 and preventing the misappropriation of this tRNA by the elongation apparatus.</text>
</comment>
<comment type="catalytic activity">
    <reaction evidence="1">
        <text>L-methionyl-tRNA(fMet) + (6R)-10-formyltetrahydrofolate = N-formyl-L-methionyl-tRNA(fMet) + (6S)-5,6,7,8-tetrahydrofolate + H(+)</text>
        <dbReference type="Rhea" id="RHEA:24380"/>
        <dbReference type="Rhea" id="RHEA-COMP:9952"/>
        <dbReference type="Rhea" id="RHEA-COMP:9953"/>
        <dbReference type="ChEBI" id="CHEBI:15378"/>
        <dbReference type="ChEBI" id="CHEBI:57453"/>
        <dbReference type="ChEBI" id="CHEBI:78530"/>
        <dbReference type="ChEBI" id="CHEBI:78844"/>
        <dbReference type="ChEBI" id="CHEBI:195366"/>
        <dbReference type="EC" id="2.1.2.9"/>
    </reaction>
</comment>
<comment type="similarity">
    <text evidence="1">Belongs to the Fmt family.</text>
</comment>
<protein>
    <recommendedName>
        <fullName evidence="1">Methionyl-tRNA formyltransferase</fullName>
        <ecNumber evidence="1">2.1.2.9</ecNumber>
    </recommendedName>
</protein>
<accession>Q049P0</accession>
<sequence>MNSVIFLGTPQFGATVLEGLIKAGYHILAVVTQPDKKVGRKQKVVYSPVKEVALANDLPLYQPVRLSKSDELDELLQLDADFIITAAFGQFLPTKFLKSAKIAAVNVHGSLLPKYRGGAPIQYAVRNGDAETGVTIMEMVKEMDAGDMYAQASLPIRPDETSGEVFEELAPLGRDLLLETLPKIASGEIVKKPQDPSQVVFSPTISKAEERISLKLTAKEAKNLIRALNPDPGAYLVIKGQRLKVWKAEVADDNTSLPAGHLLTNQGRFAISFAGNTVLNLLEVQPNGKKAMAIKDFLNGQGKKFAAGEKIVDED</sequence>
<gene>
    <name evidence="1" type="primary">fmt</name>
    <name type="ordered locus">LBUL_1309</name>
</gene>
<feature type="chain" id="PRO_1000020085" description="Methionyl-tRNA formyltransferase">
    <location>
        <begin position="1"/>
        <end position="315"/>
    </location>
</feature>
<feature type="binding site" evidence="1">
    <location>
        <begin position="110"/>
        <end position="113"/>
    </location>
    <ligand>
        <name>(6S)-5,6,7,8-tetrahydrofolate</name>
        <dbReference type="ChEBI" id="CHEBI:57453"/>
    </ligand>
</feature>